<accession>B0SPB4</accession>
<name>RSMI_LEPBP</name>
<reference key="1">
    <citation type="journal article" date="2008" name="PLoS ONE">
        <title>Genome sequence of the saprophyte Leptospira biflexa provides insights into the evolution of Leptospira and the pathogenesis of leptospirosis.</title>
        <authorList>
            <person name="Picardeau M."/>
            <person name="Bulach D.M."/>
            <person name="Bouchier C."/>
            <person name="Zuerner R.L."/>
            <person name="Zidane N."/>
            <person name="Wilson P.J."/>
            <person name="Creno S."/>
            <person name="Kuczek E.S."/>
            <person name="Bommezzadri S."/>
            <person name="Davis J.C."/>
            <person name="McGrath A."/>
            <person name="Johnson M.J."/>
            <person name="Boursaux-Eude C."/>
            <person name="Seemann T."/>
            <person name="Rouy Z."/>
            <person name="Coppel R.L."/>
            <person name="Rood J.I."/>
            <person name="Lajus A."/>
            <person name="Davies J.K."/>
            <person name="Medigue C."/>
            <person name="Adler B."/>
        </authorList>
    </citation>
    <scope>NUCLEOTIDE SEQUENCE [LARGE SCALE GENOMIC DNA]</scope>
    <source>
        <strain>Patoc 1 / ATCC 23582 / Paris</strain>
    </source>
</reference>
<feature type="chain" id="PRO_0000394488" description="Ribosomal RNA small subunit methyltransferase I">
    <location>
        <begin position="1"/>
        <end position="240"/>
    </location>
</feature>
<organism>
    <name type="scientific">Leptospira biflexa serovar Patoc (strain Patoc 1 / ATCC 23582 / Paris)</name>
    <dbReference type="NCBI Taxonomy" id="456481"/>
    <lineage>
        <taxon>Bacteria</taxon>
        <taxon>Pseudomonadati</taxon>
        <taxon>Spirochaetota</taxon>
        <taxon>Spirochaetia</taxon>
        <taxon>Leptospirales</taxon>
        <taxon>Leptospiraceae</taxon>
        <taxon>Leptospira</taxon>
    </lineage>
</organism>
<evidence type="ECO:0000255" key="1">
    <source>
        <dbReference type="HAMAP-Rule" id="MF_01877"/>
    </source>
</evidence>
<keyword id="KW-0963">Cytoplasm</keyword>
<keyword id="KW-0489">Methyltransferase</keyword>
<keyword id="KW-1185">Reference proteome</keyword>
<keyword id="KW-0698">rRNA processing</keyword>
<keyword id="KW-0949">S-adenosyl-L-methionine</keyword>
<keyword id="KW-0808">Transferase</keyword>
<comment type="function">
    <text evidence="1">Catalyzes the 2'-O-methylation of the ribose of cytidine 1402 (C1402) in 16S rRNA.</text>
</comment>
<comment type="catalytic activity">
    <reaction evidence="1">
        <text>cytidine(1402) in 16S rRNA + S-adenosyl-L-methionine = 2'-O-methylcytidine(1402) in 16S rRNA + S-adenosyl-L-homocysteine + H(+)</text>
        <dbReference type="Rhea" id="RHEA:42924"/>
        <dbReference type="Rhea" id="RHEA-COMP:10285"/>
        <dbReference type="Rhea" id="RHEA-COMP:10286"/>
        <dbReference type="ChEBI" id="CHEBI:15378"/>
        <dbReference type="ChEBI" id="CHEBI:57856"/>
        <dbReference type="ChEBI" id="CHEBI:59789"/>
        <dbReference type="ChEBI" id="CHEBI:74495"/>
        <dbReference type="ChEBI" id="CHEBI:82748"/>
        <dbReference type="EC" id="2.1.1.198"/>
    </reaction>
</comment>
<comment type="subcellular location">
    <subcellularLocation>
        <location evidence="1">Cytoplasm</location>
    </subcellularLocation>
</comment>
<comment type="similarity">
    <text evidence="1">Belongs to the methyltransferase superfamily. RsmI family.</text>
</comment>
<protein>
    <recommendedName>
        <fullName evidence="1">Ribosomal RNA small subunit methyltransferase I</fullName>
        <ecNumber evidence="1">2.1.1.198</ecNumber>
    </recommendedName>
    <alternativeName>
        <fullName evidence="1">16S rRNA 2'-O-ribose C1402 methyltransferase</fullName>
    </alternativeName>
    <alternativeName>
        <fullName evidence="1">rRNA (cytidine-2'-O-)-methyltransferase RsmI</fullName>
    </alternativeName>
</protein>
<dbReference type="EC" id="2.1.1.198" evidence="1"/>
<dbReference type="EMBL" id="CP000786">
    <property type="protein sequence ID" value="ABZ97438.1"/>
    <property type="molecule type" value="Genomic_DNA"/>
</dbReference>
<dbReference type="RefSeq" id="WP_012388319.1">
    <property type="nucleotide sequence ID" value="NC_010602.1"/>
</dbReference>
<dbReference type="SMR" id="B0SPB4"/>
<dbReference type="STRING" id="456481.LEPBI_I1328"/>
<dbReference type="KEGG" id="lbi:LEPBI_I1328"/>
<dbReference type="HOGENOM" id="CLU_044779_4_0_12"/>
<dbReference type="OrthoDB" id="9809084at2"/>
<dbReference type="BioCyc" id="LBIF456481:LEPBI_RS06505-MONOMER"/>
<dbReference type="Proteomes" id="UP000001847">
    <property type="component" value="Chromosome I"/>
</dbReference>
<dbReference type="GO" id="GO:0005737">
    <property type="term" value="C:cytoplasm"/>
    <property type="evidence" value="ECO:0007669"/>
    <property type="project" value="UniProtKB-SubCell"/>
</dbReference>
<dbReference type="GO" id="GO:0070677">
    <property type="term" value="F:rRNA (cytosine-2'-O-)-methyltransferase activity"/>
    <property type="evidence" value="ECO:0007669"/>
    <property type="project" value="UniProtKB-UniRule"/>
</dbReference>
<dbReference type="CDD" id="cd11648">
    <property type="entry name" value="RsmI"/>
    <property type="match status" value="1"/>
</dbReference>
<dbReference type="Gene3D" id="3.40.1010.10">
    <property type="entry name" value="Cobalt-precorrin-4 Transmethylase, Domain 1"/>
    <property type="match status" value="1"/>
</dbReference>
<dbReference type="Gene3D" id="3.30.950.10">
    <property type="entry name" value="Methyltransferase, Cobalt-precorrin-4 Transmethylase, Domain 2"/>
    <property type="match status" value="1"/>
</dbReference>
<dbReference type="HAMAP" id="MF_01877">
    <property type="entry name" value="16SrRNA_methyltr_I"/>
    <property type="match status" value="1"/>
</dbReference>
<dbReference type="InterPro" id="IPR000878">
    <property type="entry name" value="4pyrrol_Mease"/>
</dbReference>
<dbReference type="InterPro" id="IPR035996">
    <property type="entry name" value="4pyrrol_Methylase_sf"/>
</dbReference>
<dbReference type="InterPro" id="IPR014777">
    <property type="entry name" value="4pyrrole_Mease_sub1"/>
</dbReference>
<dbReference type="InterPro" id="IPR014776">
    <property type="entry name" value="4pyrrole_Mease_sub2"/>
</dbReference>
<dbReference type="InterPro" id="IPR008189">
    <property type="entry name" value="rRNA_ssu_MeTfrase_I"/>
</dbReference>
<dbReference type="InterPro" id="IPR018063">
    <property type="entry name" value="SAM_MeTrfase_RsmI_CS"/>
</dbReference>
<dbReference type="NCBIfam" id="TIGR00096">
    <property type="entry name" value="16S rRNA (cytidine(1402)-2'-O)-methyltransferase"/>
    <property type="match status" value="1"/>
</dbReference>
<dbReference type="PANTHER" id="PTHR46111">
    <property type="entry name" value="RIBOSOMAL RNA SMALL SUBUNIT METHYLTRANSFERASE I"/>
    <property type="match status" value="1"/>
</dbReference>
<dbReference type="PANTHER" id="PTHR46111:SF1">
    <property type="entry name" value="RIBOSOMAL RNA SMALL SUBUNIT METHYLTRANSFERASE I"/>
    <property type="match status" value="1"/>
</dbReference>
<dbReference type="Pfam" id="PF00590">
    <property type="entry name" value="TP_methylase"/>
    <property type="match status" value="1"/>
</dbReference>
<dbReference type="PIRSF" id="PIRSF005917">
    <property type="entry name" value="MTase_YraL"/>
    <property type="match status" value="1"/>
</dbReference>
<dbReference type="SUPFAM" id="SSF53790">
    <property type="entry name" value="Tetrapyrrole methylase"/>
    <property type="match status" value="1"/>
</dbReference>
<dbReference type="PROSITE" id="PS01296">
    <property type="entry name" value="RSMI"/>
    <property type="match status" value="1"/>
</dbReference>
<proteinExistence type="inferred from homology"/>
<gene>
    <name evidence="1" type="primary">rsmI</name>
    <name type="ordered locus">LEPBI_I1328</name>
</gene>
<sequence length="240" mass="26585">MAYKREKGLLYVVATPIGNMGDITLRAIDVLKEVDLVLCESAKETKSLFHKLGISTPVLALYKDHSETPFANVLEQLKQGKSMALVSDAGTPGVSDPGSQMVRTARENGISIVPVPGASALTALLSVSGFQVNPTYFLGFLSEKPSKKRRELERAREIEGLIVFYESVHKLPRLYPILEELFPETEVLMGRELTKAFEEVVYYANPRELANNPPNAKGEFVFLLNHRKKSLKGNSDSTDM</sequence>